<gene>
    <name type="ordered locus">PP_4268</name>
</gene>
<name>Y4268_PSEPK</name>
<evidence type="ECO:0000255" key="1">
    <source>
        <dbReference type="HAMAP-Rule" id="MF_00274"/>
    </source>
</evidence>
<evidence type="ECO:0000256" key="2">
    <source>
        <dbReference type="SAM" id="MobiDB-lite"/>
    </source>
</evidence>
<comment type="function">
    <text evidence="1">Binds to DNA and alters its conformation. May be involved in regulation of gene expression, nucleoid organization and DNA protection.</text>
</comment>
<comment type="subunit">
    <text evidence="1">Homodimer.</text>
</comment>
<comment type="subcellular location">
    <subcellularLocation>
        <location evidence="1">Cytoplasm</location>
        <location evidence="1">Nucleoid</location>
    </subcellularLocation>
</comment>
<comment type="similarity">
    <text evidence="1">Belongs to the YbaB/EbfC family.</text>
</comment>
<dbReference type="EMBL" id="AE015451">
    <property type="protein sequence ID" value="AAN69848.1"/>
    <property type="molecule type" value="Genomic_DNA"/>
</dbReference>
<dbReference type="RefSeq" id="NP_746384.1">
    <property type="nucleotide sequence ID" value="NC_002947.4"/>
</dbReference>
<dbReference type="RefSeq" id="WP_003254305.1">
    <property type="nucleotide sequence ID" value="NZ_CP169744.1"/>
</dbReference>
<dbReference type="SMR" id="Q88F31"/>
<dbReference type="STRING" id="160488.PP_4268"/>
<dbReference type="PaxDb" id="160488-PP_4268"/>
<dbReference type="KEGG" id="ppu:PP_4268"/>
<dbReference type="PATRIC" id="fig|160488.4.peg.4538"/>
<dbReference type="eggNOG" id="COG0718">
    <property type="taxonomic scope" value="Bacteria"/>
</dbReference>
<dbReference type="HOGENOM" id="CLU_140930_0_0_6"/>
<dbReference type="OrthoDB" id="9808738at2"/>
<dbReference type="PhylomeDB" id="Q88F31"/>
<dbReference type="BioCyc" id="PPUT160488:G1G01-4541-MONOMER"/>
<dbReference type="Proteomes" id="UP000000556">
    <property type="component" value="Chromosome"/>
</dbReference>
<dbReference type="GO" id="GO:0043590">
    <property type="term" value="C:bacterial nucleoid"/>
    <property type="evidence" value="ECO:0007669"/>
    <property type="project" value="UniProtKB-UniRule"/>
</dbReference>
<dbReference type="GO" id="GO:0005829">
    <property type="term" value="C:cytosol"/>
    <property type="evidence" value="ECO:0007669"/>
    <property type="project" value="TreeGrafter"/>
</dbReference>
<dbReference type="GO" id="GO:0003677">
    <property type="term" value="F:DNA binding"/>
    <property type="evidence" value="ECO:0007669"/>
    <property type="project" value="UniProtKB-UniRule"/>
</dbReference>
<dbReference type="FunFam" id="3.30.1310.10:FF:000001">
    <property type="entry name" value="Nucleoid-associated protein YbaB"/>
    <property type="match status" value="1"/>
</dbReference>
<dbReference type="Gene3D" id="3.30.1310.10">
    <property type="entry name" value="Nucleoid-associated protein YbaB-like domain"/>
    <property type="match status" value="1"/>
</dbReference>
<dbReference type="HAMAP" id="MF_00274">
    <property type="entry name" value="DNA_YbaB_EbfC"/>
    <property type="match status" value="1"/>
</dbReference>
<dbReference type="InterPro" id="IPR036894">
    <property type="entry name" value="YbaB-like_sf"/>
</dbReference>
<dbReference type="InterPro" id="IPR004401">
    <property type="entry name" value="YbaB/EbfC"/>
</dbReference>
<dbReference type="NCBIfam" id="TIGR00103">
    <property type="entry name" value="DNA_YbaB_EbfC"/>
    <property type="match status" value="1"/>
</dbReference>
<dbReference type="PANTHER" id="PTHR33449">
    <property type="entry name" value="NUCLEOID-ASSOCIATED PROTEIN YBAB"/>
    <property type="match status" value="1"/>
</dbReference>
<dbReference type="PANTHER" id="PTHR33449:SF1">
    <property type="entry name" value="NUCLEOID-ASSOCIATED PROTEIN YBAB"/>
    <property type="match status" value="1"/>
</dbReference>
<dbReference type="Pfam" id="PF02575">
    <property type="entry name" value="YbaB_DNA_bd"/>
    <property type="match status" value="1"/>
</dbReference>
<dbReference type="PIRSF" id="PIRSF004555">
    <property type="entry name" value="UCP004555"/>
    <property type="match status" value="1"/>
</dbReference>
<dbReference type="SUPFAM" id="SSF82607">
    <property type="entry name" value="YbaB-like"/>
    <property type="match status" value="1"/>
</dbReference>
<keyword id="KW-0963">Cytoplasm</keyword>
<keyword id="KW-0238">DNA-binding</keyword>
<keyword id="KW-1185">Reference proteome</keyword>
<accession>Q88F31</accession>
<proteinExistence type="inferred from homology"/>
<organism>
    <name type="scientific">Pseudomonas putida (strain ATCC 47054 / DSM 6125 / CFBP 8728 / NCIMB 11950 / KT2440)</name>
    <dbReference type="NCBI Taxonomy" id="160488"/>
    <lineage>
        <taxon>Bacteria</taxon>
        <taxon>Pseudomonadati</taxon>
        <taxon>Pseudomonadota</taxon>
        <taxon>Gammaproteobacteria</taxon>
        <taxon>Pseudomonadales</taxon>
        <taxon>Pseudomonadaceae</taxon>
        <taxon>Pseudomonas</taxon>
    </lineage>
</organism>
<protein>
    <recommendedName>
        <fullName evidence="1">Nucleoid-associated protein PP_4268</fullName>
    </recommendedName>
</protein>
<feature type="chain" id="PRO_0000170424" description="Nucleoid-associated protein PP_4268">
    <location>
        <begin position="1"/>
        <end position="111"/>
    </location>
</feature>
<feature type="region of interest" description="Disordered" evidence="2">
    <location>
        <begin position="1"/>
        <end position="25"/>
    </location>
</feature>
<feature type="region of interest" description="Disordered" evidence="2">
    <location>
        <begin position="87"/>
        <end position="111"/>
    </location>
</feature>
<reference key="1">
    <citation type="journal article" date="2002" name="Environ. Microbiol.">
        <title>Complete genome sequence and comparative analysis of the metabolically versatile Pseudomonas putida KT2440.</title>
        <authorList>
            <person name="Nelson K.E."/>
            <person name="Weinel C."/>
            <person name="Paulsen I.T."/>
            <person name="Dodson R.J."/>
            <person name="Hilbert H."/>
            <person name="Martins dos Santos V.A.P."/>
            <person name="Fouts D.E."/>
            <person name="Gill S.R."/>
            <person name="Pop M."/>
            <person name="Holmes M."/>
            <person name="Brinkac L.M."/>
            <person name="Beanan M.J."/>
            <person name="DeBoy R.T."/>
            <person name="Daugherty S.C."/>
            <person name="Kolonay J.F."/>
            <person name="Madupu R."/>
            <person name="Nelson W.C."/>
            <person name="White O."/>
            <person name="Peterson J.D."/>
            <person name="Khouri H.M."/>
            <person name="Hance I."/>
            <person name="Chris Lee P."/>
            <person name="Holtzapple E.K."/>
            <person name="Scanlan D."/>
            <person name="Tran K."/>
            <person name="Moazzez A."/>
            <person name="Utterback T.R."/>
            <person name="Rizzo M."/>
            <person name="Lee K."/>
            <person name="Kosack D."/>
            <person name="Moestl D."/>
            <person name="Wedler H."/>
            <person name="Lauber J."/>
            <person name="Stjepandic D."/>
            <person name="Hoheisel J."/>
            <person name="Straetz M."/>
            <person name="Heim S."/>
            <person name="Kiewitz C."/>
            <person name="Eisen J.A."/>
            <person name="Timmis K.N."/>
            <person name="Duesterhoeft A."/>
            <person name="Tuemmler B."/>
            <person name="Fraser C.M."/>
        </authorList>
    </citation>
    <scope>NUCLEOTIDE SEQUENCE [LARGE SCALE GENOMIC DNA]</scope>
    <source>
        <strain>ATCC 47054 / DSM 6125 / CFBP 8728 / NCIMB 11950 / KT2440</strain>
    </source>
</reference>
<sequence>MMKGGMAGLMKQAQQMQEKMQKMQEELANAEVTGQSGGGLVSVVMTGRHDVKRVSIDQSLMSTDEDDKEVLEDLIAAALNDAVRKVEQSSQEKMGGMTAGMQLPPGFKMPF</sequence>